<name>YTIB_BACSU</name>
<sequence length="187" mass="21111">MSLLNDILEFNKTFTEQREYEKYQTSKFPDKKMAILSCMDTRLVELLPHAMNLRNGDVKIIKSAGALVTHPFGSIMRSILVAVYELNADEVCVIGHHDCGMSKISSKSMLEKIKARGIPEERIETIKYSGVDFDQWFKSFDSVEASVKDSVDVIKHHPLFPENVPVHGLVIDPKTGKLDLIVNGYNN</sequence>
<accession>O34872</accession>
<accession>Q795N8</accession>
<feature type="chain" id="PRO_0000360664" description="Putative carbonic anhydrase YtiB">
    <location>
        <begin position="1"/>
        <end position="187"/>
    </location>
</feature>
<feature type="binding site" evidence="1">
    <location>
        <position position="38"/>
    </location>
    <ligand>
        <name>Zn(2+)</name>
        <dbReference type="ChEBI" id="CHEBI:29105"/>
    </ligand>
</feature>
<feature type="binding site" evidence="1">
    <location>
        <position position="40"/>
    </location>
    <ligand>
        <name>Zn(2+)</name>
        <dbReference type="ChEBI" id="CHEBI:29105"/>
    </ligand>
</feature>
<feature type="binding site" evidence="1">
    <location>
        <position position="96"/>
    </location>
    <ligand>
        <name>Zn(2+)</name>
        <dbReference type="ChEBI" id="CHEBI:29105"/>
    </ligand>
</feature>
<feature type="binding site" evidence="1">
    <location>
        <position position="99"/>
    </location>
    <ligand>
        <name>Zn(2+)</name>
        <dbReference type="ChEBI" id="CHEBI:29105"/>
    </ligand>
</feature>
<reference key="1">
    <citation type="journal article" date="1997" name="Microbiology">
        <title>Sequencing and functional annotation of the Bacillus subtilis genes in the 200 kb rrnB-dnaB region.</title>
        <authorList>
            <person name="Lapidus A."/>
            <person name="Galleron N."/>
            <person name="Sorokin A."/>
            <person name="Ehrlich S.D."/>
        </authorList>
    </citation>
    <scope>NUCLEOTIDE SEQUENCE [GENOMIC DNA]</scope>
    <source>
        <strain>168</strain>
    </source>
</reference>
<reference key="2">
    <citation type="journal article" date="1997" name="Nature">
        <title>The complete genome sequence of the Gram-positive bacterium Bacillus subtilis.</title>
        <authorList>
            <person name="Kunst F."/>
            <person name="Ogasawara N."/>
            <person name="Moszer I."/>
            <person name="Albertini A.M."/>
            <person name="Alloni G."/>
            <person name="Azevedo V."/>
            <person name="Bertero M.G."/>
            <person name="Bessieres P."/>
            <person name="Bolotin A."/>
            <person name="Borchert S."/>
            <person name="Borriss R."/>
            <person name="Boursier L."/>
            <person name="Brans A."/>
            <person name="Braun M."/>
            <person name="Brignell S.C."/>
            <person name="Bron S."/>
            <person name="Brouillet S."/>
            <person name="Bruschi C.V."/>
            <person name="Caldwell B."/>
            <person name="Capuano V."/>
            <person name="Carter N.M."/>
            <person name="Choi S.-K."/>
            <person name="Codani J.-J."/>
            <person name="Connerton I.F."/>
            <person name="Cummings N.J."/>
            <person name="Daniel R.A."/>
            <person name="Denizot F."/>
            <person name="Devine K.M."/>
            <person name="Duesterhoeft A."/>
            <person name="Ehrlich S.D."/>
            <person name="Emmerson P.T."/>
            <person name="Entian K.-D."/>
            <person name="Errington J."/>
            <person name="Fabret C."/>
            <person name="Ferrari E."/>
            <person name="Foulger D."/>
            <person name="Fritz C."/>
            <person name="Fujita M."/>
            <person name="Fujita Y."/>
            <person name="Fuma S."/>
            <person name="Galizzi A."/>
            <person name="Galleron N."/>
            <person name="Ghim S.-Y."/>
            <person name="Glaser P."/>
            <person name="Goffeau A."/>
            <person name="Golightly E.J."/>
            <person name="Grandi G."/>
            <person name="Guiseppi G."/>
            <person name="Guy B.J."/>
            <person name="Haga K."/>
            <person name="Haiech J."/>
            <person name="Harwood C.R."/>
            <person name="Henaut A."/>
            <person name="Hilbert H."/>
            <person name="Holsappel S."/>
            <person name="Hosono S."/>
            <person name="Hullo M.-F."/>
            <person name="Itaya M."/>
            <person name="Jones L.-M."/>
            <person name="Joris B."/>
            <person name="Karamata D."/>
            <person name="Kasahara Y."/>
            <person name="Klaerr-Blanchard M."/>
            <person name="Klein C."/>
            <person name="Kobayashi Y."/>
            <person name="Koetter P."/>
            <person name="Koningstein G."/>
            <person name="Krogh S."/>
            <person name="Kumano M."/>
            <person name="Kurita K."/>
            <person name="Lapidus A."/>
            <person name="Lardinois S."/>
            <person name="Lauber J."/>
            <person name="Lazarevic V."/>
            <person name="Lee S.-M."/>
            <person name="Levine A."/>
            <person name="Liu H."/>
            <person name="Masuda S."/>
            <person name="Mauel C."/>
            <person name="Medigue C."/>
            <person name="Medina N."/>
            <person name="Mellado R.P."/>
            <person name="Mizuno M."/>
            <person name="Moestl D."/>
            <person name="Nakai S."/>
            <person name="Noback M."/>
            <person name="Noone D."/>
            <person name="O'Reilly M."/>
            <person name="Ogawa K."/>
            <person name="Ogiwara A."/>
            <person name="Oudega B."/>
            <person name="Park S.-H."/>
            <person name="Parro V."/>
            <person name="Pohl T.M."/>
            <person name="Portetelle D."/>
            <person name="Porwollik S."/>
            <person name="Prescott A.M."/>
            <person name="Presecan E."/>
            <person name="Pujic P."/>
            <person name="Purnelle B."/>
            <person name="Rapoport G."/>
            <person name="Rey M."/>
            <person name="Reynolds S."/>
            <person name="Rieger M."/>
            <person name="Rivolta C."/>
            <person name="Rocha E."/>
            <person name="Roche B."/>
            <person name="Rose M."/>
            <person name="Sadaie Y."/>
            <person name="Sato T."/>
            <person name="Scanlan E."/>
            <person name="Schleich S."/>
            <person name="Schroeter R."/>
            <person name="Scoffone F."/>
            <person name="Sekiguchi J."/>
            <person name="Sekowska A."/>
            <person name="Seror S.J."/>
            <person name="Serror P."/>
            <person name="Shin B.-S."/>
            <person name="Soldo B."/>
            <person name="Sorokin A."/>
            <person name="Tacconi E."/>
            <person name="Takagi T."/>
            <person name="Takahashi H."/>
            <person name="Takemaru K."/>
            <person name="Takeuchi M."/>
            <person name="Tamakoshi A."/>
            <person name="Tanaka T."/>
            <person name="Terpstra P."/>
            <person name="Tognoni A."/>
            <person name="Tosato V."/>
            <person name="Uchiyama S."/>
            <person name="Vandenbol M."/>
            <person name="Vannier F."/>
            <person name="Vassarotti A."/>
            <person name="Viari A."/>
            <person name="Wambutt R."/>
            <person name="Wedler E."/>
            <person name="Wedler H."/>
            <person name="Weitzenegger T."/>
            <person name="Winters P."/>
            <person name="Wipat A."/>
            <person name="Yamamoto H."/>
            <person name="Yamane K."/>
            <person name="Yasumoto K."/>
            <person name="Yata K."/>
            <person name="Yoshida K."/>
            <person name="Yoshikawa H.-F."/>
            <person name="Zumstein E."/>
            <person name="Yoshikawa H."/>
            <person name="Danchin A."/>
        </authorList>
    </citation>
    <scope>NUCLEOTIDE SEQUENCE [LARGE SCALE GENOMIC DNA]</scope>
    <source>
        <strain>168</strain>
    </source>
</reference>
<protein>
    <recommendedName>
        <fullName>Putative carbonic anhydrase YtiB</fullName>
        <ecNumber>4.2.1.1</ecNumber>
    </recommendedName>
    <alternativeName>
        <fullName>Carbonate dehydratase</fullName>
    </alternativeName>
</protein>
<proteinExistence type="inferred from homology"/>
<comment type="function">
    <text evidence="1">Reversible hydration of carbon dioxide.</text>
</comment>
<comment type="catalytic activity">
    <reaction>
        <text>hydrogencarbonate + H(+) = CO2 + H2O</text>
        <dbReference type="Rhea" id="RHEA:10748"/>
        <dbReference type="ChEBI" id="CHEBI:15377"/>
        <dbReference type="ChEBI" id="CHEBI:15378"/>
        <dbReference type="ChEBI" id="CHEBI:16526"/>
        <dbReference type="ChEBI" id="CHEBI:17544"/>
        <dbReference type="EC" id="4.2.1.1"/>
    </reaction>
</comment>
<comment type="cofactor">
    <cofactor evidence="1">
        <name>Zn(2+)</name>
        <dbReference type="ChEBI" id="CHEBI:29105"/>
    </cofactor>
    <text evidence="1">Binds 1 zinc ion per subunit.</text>
</comment>
<comment type="similarity">
    <text evidence="2">Belongs to the beta-class carbonic anhydrase family.</text>
</comment>
<dbReference type="EC" id="4.2.1.1"/>
<dbReference type="EMBL" id="AF008220">
    <property type="protein sequence ID" value="AAC00234.1"/>
    <property type="molecule type" value="Genomic_DNA"/>
</dbReference>
<dbReference type="EMBL" id="AL009126">
    <property type="protein sequence ID" value="CAB15047.1"/>
    <property type="molecule type" value="Genomic_DNA"/>
</dbReference>
<dbReference type="PIR" id="F69993">
    <property type="entry name" value="F69993"/>
</dbReference>
<dbReference type="RefSeq" id="NP_390947.1">
    <property type="nucleotide sequence ID" value="NC_000964.3"/>
</dbReference>
<dbReference type="RefSeq" id="WP_003229074.1">
    <property type="nucleotide sequence ID" value="NZ_OZ025638.1"/>
</dbReference>
<dbReference type="SMR" id="O34872"/>
<dbReference type="FunCoup" id="O34872">
    <property type="interactions" value="88"/>
</dbReference>
<dbReference type="STRING" id="224308.BSU30690"/>
<dbReference type="jPOST" id="O34872"/>
<dbReference type="PaxDb" id="224308-BSU30690"/>
<dbReference type="EnsemblBacteria" id="CAB15047">
    <property type="protein sequence ID" value="CAB15047"/>
    <property type="gene ID" value="BSU_30690"/>
</dbReference>
<dbReference type="GeneID" id="938087"/>
<dbReference type="KEGG" id="bsu:BSU30690"/>
<dbReference type="PATRIC" id="fig|224308.179.peg.3327"/>
<dbReference type="eggNOG" id="COG0288">
    <property type="taxonomic scope" value="Bacteria"/>
</dbReference>
<dbReference type="InParanoid" id="O34872"/>
<dbReference type="OrthoDB" id="9792260at2"/>
<dbReference type="PhylomeDB" id="O34872"/>
<dbReference type="BioCyc" id="BSUB:BSU30690-MONOMER"/>
<dbReference type="Proteomes" id="UP000001570">
    <property type="component" value="Chromosome"/>
</dbReference>
<dbReference type="GO" id="GO:0004089">
    <property type="term" value="F:carbonate dehydratase activity"/>
    <property type="evidence" value="ECO:0007669"/>
    <property type="project" value="UniProtKB-EC"/>
</dbReference>
<dbReference type="GO" id="GO:0008270">
    <property type="term" value="F:zinc ion binding"/>
    <property type="evidence" value="ECO:0007669"/>
    <property type="project" value="InterPro"/>
</dbReference>
<dbReference type="CDD" id="cd03379">
    <property type="entry name" value="beta_CA_cladeD"/>
    <property type="match status" value="1"/>
</dbReference>
<dbReference type="Gene3D" id="3.40.1050.10">
    <property type="entry name" value="Carbonic anhydrase"/>
    <property type="match status" value="1"/>
</dbReference>
<dbReference type="InterPro" id="IPR001765">
    <property type="entry name" value="Carbonic_anhydrase"/>
</dbReference>
<dbReference type="InterPro" id="IPR036874">
    <property type="entry name" value="Carbonic_anhydrase_sf"/>
</dbReference>
<dbReference type="PANTHER" id="PTHR43175:SF3">
    <property type="entry name" value="CARBON DISULFIDE HYDROLASE"/>
    <property type="match status" value="1"/>
</dbReference>
<dbReference type="PANTHER" id="PTHR43175">
    <property type="entry name" value="CARBONIC ANHYDRASE"/>
    <property type="match status" value="1"/>
</dbReference>
<dbReference type="Pfam" id="PF00484">
    <property type="entry name" value="Pro_CA"/>
    <property type="match status" value="1"/>
</dbReference>
<dbReference type="SMART" id="SM00947">
    <property type="entry name" value="Pro_CA"/>
    <property type="match status" value="1"/>
</dbReference>
<dbReference type="SUPFAM" id="SSF53056">
    <property type="entry name" value="beta-carbonic anhydrase, cab"/>
    <property type="match status" value="1"/>
</dbReference>
<evidence type="ECO:0000250" key="1"/>
<evidence type="ECO:0000305" key="2"/>
<keyword id="KW-0456">Lyase</keyword>
<keyword id="KW-0479">Metal-binding</keyword>
<keyword id="KW-1185">Reference proteome</keyword>
<keyword id="KW-0862">Zinc</keyword>
<gene>
    <name type="primary">ytiB</name>
    <name type="ordered locus">BSU30690</name>
</gene>
<organism>
    <name type="scientific">Bacillus subtilis (strain 168)</name>
    <dbReference type="NCBI Taxonomy" id="224308"/>
    <lineage>
        <taxon>Bacteria</taxon>
        <taxon>Bacillati</taxon>
        <taxon>Bacillota</taxon>
        <taxon>Bacilli</taxon>
        <taxon>Bacillales</taxon>
        <taxon>Bacillaceae</taxon>
        <taxon>Bacillus</taxon>
    </lineage>
</organism>